<evidence type="ECO:0000250" key="1"/>
<evidence type="ECO:0000255" key="2"/>
<evidence type="ECO:0000305" key="3"/>
<keyword id="KW-1003">Cell membrane</keyword>
<keyword id="KW-0472">Membrane</keyword>
<keyword id="KW-0479">Metal-binding</keyword>
<keyword id="KW-0533">Nickel</keyword>
<keyword id="KW-0560">Oxidoreductase</keyword>
<accession>P18191</accession>
<accession>Q43952</accession>
<dbReference type="EC" id="1.12.99.6"/>
<dbReference type="EMBL" id="X52961">
    <property type="protein sequence ID" value="CAA37134.1"/>
    <property type="molecule type" value="Genomic_DNA"/>
</dbReference>
<dbReference type="EMBL" id="L25315">
    <property type="protein sequence ID" value="AAA64446.1"/>
    <property type="molecule type" value="Genomic_DNA"/>
</dbReference>
<dbReference type="PIR" id="S11777">
    <property type="entry name" value="S11777"/>
</dbReference>
<dbReference type="PIR" id="S53655">
    <property type="entry name" value="S53655"/>
</dbReference>
<dbReference type="SMR" id="P18191"/>
<dbReference type="GO" id="GO:0005886">
    <property type="term" value="C:plasma membrane"/>
    <property type="evidence" value="ECO:0007669"/>
    <property type="project" value="UniProtKB-SubCell"/>
</dbReference>
<dbReference type="GO" id="GO:0008901">
    <property type="term" value="F:ferredoxin hydrogenase activity"/>
    <property type="evidence" value="ECO:0007669"/>
    <property type="project" value="InterPro"/>
</dbReference>
<dbReference type="GO" id="GO:0033748">
    <property type="term" value="F:hydrogenase (acceptor) activity"/>
    <property type="evidence" value="ECO:0007669"/>
    <property type="project" value="UniProtKB-EC"/>
</dbReference>
<dbReference type="GO" id="GO:0016151">
    <property type="term" value="F:nickel cation binding"/>
    <property type="evidence" value="ECO:0007669"/>
    <property type="project" value="InterPro"/>
</dbReference>
<dbReference type="FunFam" id="1.10.645.10:FF:000002">
    <property type="entry name" value="Hydrogenase 2 large subunit"/>
    <property type="match status" value="1"/>
</dbReference>
<dbReference type="Gene3D" id="1.10.645.10">
    <property type="entry name" value="Cytochrome-c3 Hydrogenase, chain B"/>
    <property type="match status" value="1"/>
</dbReference>
<dbReference type="InterPro" id="IPR001501">
    <property type="entry name" value="Ni-dep_hyd_lsu"/>
</dbReference>
<dbReference type="InterPro" id="IPR018194">
    <property type="entry name" value="Ni-dep_hyd_lsu_Ni_BS"/>
</dbReference>
<dbReference type="InterPro" id="IPR029014">
    <property type="entry name" value="NiFe-Hase_large"/>
</dbReference>
<dbReference type="InterPro" id="IPR050867">
    <property type="entry name" value="NiFe/NiFeSe_hydrgnase_LSU"/>
</dbReference>
<dbReference type="PANTHER" id="PTHR42958">
    <property type="entry name" value="HYDROGENASE-2 LARGE CHAIN"/>
    <property type="match status" value="1"/>
</dbReference>
<dbReference type="PANTHER" id="PTHR42958:SF2">
    <property type="entry name" value="UPTAKE HYDROGENASE LARGE SUBUNIT"/>
    <property type="match status" value="1"/>
</dbReference>
<dbReference type="Pfam" id="PF00374">
    <property type="entry name" value="NiFeSe_Hases"/>
    <property type="match status" value="1"/>
</dbReference>
<dbReference type="SUPFAM" id="SSF56762">
    <property type="entry name" value="HydB/Nqo4-like"/>
    <property type="match status" value="1"/>
</dbReference>
<dbReference type="PROSITE" id="PS00507">
    <property type="entry name" value="NI_HGENASE_L_1"/>
    <property type="match status" value="1"/>
</dbReference>
<dbReference type="PROSITE" id="PS00508">
    <property type="entry name" value="NI_HGENASE_L_2"/>
    <property type="match status" value="1"/>
</dbReference>
<organism>
    <name type="scientific">Azotobacter chroococcum mcd 1</name>
    <dbReference type="NCBI Taxonomy" id="355"/>
    <lineage>
        <taxon>Bacteria</taxon>
        <taxon>Pseudomonadati</taxon>
        <taxon>Pseudomonadota</taxon>
        <taxon>Gammaproteobacteria</taxon>
        <taxon>Pseudomonadales</taxon>
        <taxon>Pseudomonadaceae</taxon>
        <taxon>Azotobacter</taxon>
    </lineage>
</organism>
<sequence>MSSLPNASQLDKSGRRIVVDPVTRIEGHMRCEVNVDANNIITNAVSTGTMWRGLEVILKGRDPRDAWAFVERICGVCTGTTRWTSVRAVEDALGIQIPYNAHLIRNLMDKQLQVQDHIVPFYHLLRLDWVNPVNALKADPKATSALPAALAAHAKSSPGYFRHVQTRLKKFVESGATACSPNGYWDNPAYQAPARPDLMAVAHYLEALDVQKDIVEIHTIFGGKNPHPNYMVGGVACAINLDDVGAAGGRSTCTSLNFVLERIHEAREFTRNVYLPDVLAVAGIYKDWLYGGGLPGHNLLSYGTFTKVPGDKSSDLLPAGAIVGGNWDEVLPVDVRVPEEIQEFVSHSWYRYADETKGLHPWDGVTEPKFELGPNTKGTRTNIKELDEAHKYSWIKARAWRGHAMEVGPLARYIIAYRSGREYVKEQVDRSLAAFNQSTGLNLGLKQFLPSTLGRTLARALECELAVDSMLDDWQALVGNIKAGDRATANVEKWDPSTWPKEAKGVGINEAPRGALGHWIRLKDGKIENYQAIVPTTWNGTPRDHLGNIGAYEAALLNTRMERPDEPVEILRTLHSFDPCLACSTHVMSPDGQELTRVKVR</sequence>
<feature type="chain" id="PRO_0000199708" description="Uptake hydrogenase large subunit">
    <location>
        <begin position="1"/>
        <end position="601"/>
    </location>
</feature>
<feature type="binding site" evidence="2">
    <location>
        <position position="74"/>
    </location>
    <ligand>
        <name>Ni(2+)</name>
        <dbReference type="ChEBI" id="CHEBI:49786"/>
    </ligand>
</feature>
<feature type="binding site" evidence="2">
    <location>
        <position position="77"/>
    </location>
    <ligand>
        <name>Ni(2+)</name>
        <dbReference type="ChEBI" id="CHEBI:49786"/>
    </ligand>
</feature>
<feature type="binding site" evidence="2">
    <location>
        <position position="580"/>
    </location>
    <ligand>
        <name>Ni(2+)</name>
        <dbReference type="ChEBI" id="CHEBI:49786"/>
    </ligand>
</feature>
<feature type="binding site" evidence="2">
    <location>
        <position position="583"/>
    </location>
    <ligand>
        <name>Ni(2+)</name>
        <dbReference type="ChEBI" id="CHEBI:49786"/>
    </ligand>
</feature>
<feature type="sequence conflict" description="In Ref. 1; CAA37134." evidence="3" ref="1">
    <original>GLKQFLP</original>
    <variation>ASSSSAL</variation>
    <location>
        <begin position="444"/>
        <end position="450"/>
    </location>
</feature>
<feature type="sequence conflict" description="In Ref. 1; CAA37134." evidence="3" ref="1">
    <original>L</original>
    <variation>S</variation>
    <location>
        <position position="457"/>
    </location>
</feature>
<feature type="sequence conflict" description="In Ref. 1; CAA37134." evidence="3" ref="1">
    <original>DPST</original>
    <variation>GPEH</variation>
    <location>
        <begin position="495"/>
        <end position="498"/>
    </location>
</feature>
<feature type="sequence conflict" description="In Ref. 1; CAA37134." evidence="3" ref="1">
    <original>ALG</original>
    <variation>RSA</variation>
    <location>
        <begin position="515"/>
        <end position="517"/>
    </location>
</feature>
<protein>
    <recommendedName>
        <fullName>Uptake hydrogenase large subunit</fullName>
        <ecNumber>1.12.99.6</ecNumber>
    </recommendedName>
    <alternativeName>
        <fullName>Hydrogenlyase</fullName>
    </alternativeName>
    <alternativeName>
        <fullName>Membrane-bound hydrogenase large subunit</fullName>
    </alternativeName>
</protein>
<comment type="function">
    <text>This enzyme recycles the H(2) produced by nitrogenase to increase the production of ATP and to protect nitrogenase against inhibition or damage by O(2) under carbon- or phosphate-limited conditions.</text>
</comment>
<comment type="catalytic activity">
    <reaction>
        <text>H2 + A = AH2</text>
        <dbReference type="Rhea" id="RHEA:12116"/>
        <dbReference type="ChEBI" id="CHEBI:13193"/>
        <dbReference type="ChEBI" id="CHEBI:17499"/>
        <dbReference type="ChEBI" id="CHEBI:18276"/>
        <dbReference type="EC" id="1.12.99.6"/>
    </reaction>
</comment>
<comment type="cofactor">
    <cofactor evidence="1">
        <name>Ni(2+)</name>
        <dbReference type="ChEBI" id="CHEBI:49786"/>
    </cofactor>
    <text evidence="1">Binds 1 nickel ion per subunit.</text>
</comment>
<comment type="subunit">
    <text>Heterodimer of a large and a small subunit.</text>
</comment>
<comment type="subcellular location">
    <subcellularLocation>
        <location>Cell membrane</location>
        <topology>Peripheral membrane protein</topology>
    </subcellularLocation>
</comment>
<comment type="similarity">
    <text evidence="3">Belongs to the [NiFe]/[NiFeSe] hydrogenase large subunit family.</text>
</comment>
<name>MBHL_AZOCH</name>
<gene>
    <name type="primary">hupL</name>
    <name type="synonym">hupB</name>
</gene>
<reference key="1">
    <citation type="journal article" date="1990" name="Mol. Microbiol.">
        <title>The identification, characterization, sequencing and mutagenesis of the genes (hupSL) encoding the small and large subunits of the H2-uptake hydrogenase of Azotobacter chroococcum.</title>
        <authorList>
            <person name="Ford C.M."/>
            <person name="Garg N."/>
            <person name="Garg R.P."/>
            <person name="Tibelius K.H."/>
            <person name="Yates M.G."/>
            <person name="Arp D.J."/>
            <person name="Seefeldt L.C."/>
        </authorList>
    </citation>
    <scope>NUCLEOTIDE SEQUENCE [GENOMIC DNA]</scope>
</reference>
<reference key="2">
    <citation type="submission" date="1990-09" db="EMBL/GenBank/DDBJ databases">
        <authorList>
            <person name="Yates M.G."/>
        </authorList>
    </citation>
    <scope>SEQUENCE REVISION TO 194 AND 564</scope>
</reference>
<reference key="3">
    <citation type="journal article" date="1994" name="J. Mol. Biol.">
        <title>Sequences, organization and analysis of the hupZMNOQRTV genes from the Azotobacter chroococcum hydrogenase gene cluster.</title>
        <authorList>
            <person name="Du L."/>
            <person name="Tibelius K.H."/>
            <person name="Souza E.M."/>
            <person name="Garg R.P."/>
            <person name="Yates M.G."/>
        </authorList>
    </citation>
    <scope>NUCLEOTIDE SEQUENCE [GENOMIC DNA] OF 428-601</scope>
</reference>
<proteinExistence type="inferred from homology"/>